<feature type="signal peptide" evidence="2">
    <location>
        <begin position="1"/>
        <end position="16"/>
    </location>
</feature>
<feature type="chain" id="PRO_0000433767" description="U-actitoxin-Avd3m">
    <location>
        <begin position="17"/>
        <end position="75"/>
    </location>
</feature>
<feature type="propeptide" id="PRO_0000433768" evidence="2">
    <location>
        <begin position="76"/>
        <end position="82"/>
    </location>
</feature>
<feature type="domain" description="BPTI/Kunitz inhibitor" evidence="4">
    <location>
        <begin position="21"/>
        <end position="71"/>
    </location>
</feature>
<feature type="site" description="Reactive bond" evidence="1">
    <location>
        <begin position="31"/>
        <end position="32"/>
    </location>
</feature>
<feature type="disulfide bond" evidence="4">
    <location>
        <begin position="21"/>
        <end position="71"/>
    </location>
</feature>
<feature type="disulfide bond" evidence="4">
    <location>
        <begin position="30"/>
        <end position="54"/>
    </location>
</feature>
<feature type="disulfide bond" evidence="4">
    <location>
        <begin position="46"/>
        <end position="67"/>
    </location>
</feature>
<sequence length="82" mass="9303">MVFLLCFFLVADVSYGINGDCELPKVVGPCRGGFRRYYYNSSSKRCEKFIYGGCRGNANNFHTLEECEKVCGVRSRDSPKEN</sequence>
<organism>
    <name type="scientific">Anemonia viridis</name>
    <name type="common">Snakelocks anemone</name>
    <dbReference type="NCBI Taxonomy" id="51769"/>
    <lineage>
        <taxon>Eukaryota</taxon>
        <taxon>Metazoa</taxon>
        <taxon>Cnidaria</taxon>
        <taxon>Anthozoa</taxon>
        <taxon>Hexacorallia</taxon>
        <taxon>Actiniaria</taxon>
        <taxon>Actiniidae</taxon>
        <taxon>Anemonia</taxon>
    </lineage>
</organism>
<comment type="function">
    <text evidence="2 3">Serine protease inhibitor that inhibits both tissue and plasma kallikreins. Has hemolytic activity. Inhibits voltage-gated potassium channels (Kv).</text>
</comment>
<comment type="subcellular location">
    <subcellularLocation>
        <location evidence="7">Secreted</location>
    </subcellularLocation>
    <subcellularLocation>
        <location evidence="7">Nematocyst</location>
    </subcellularLocation>
</comment>
<comment type="similarity">
    <text evidence="7">Belongs to the venom Kunitz-type family. Sea anemone type 2 potassium channel toxin subfamily.</text>
</comment>
<comment type="caution">
    <text evidence="7">Opinions are divided on whether Anemonia viridis (Forsskal, 1775) and Anemonia sulcata (Pennant, 1777) are separate species.</text>
</comment>
<protein>
    <recommendedName>
        <fullName evidence="6">U-actitoxin-Avd3m</fullName>
        <shortName evidence="6">U-AITX-Avd3m</shortName>
    </recommendedName>
    <alternativeName>
        <fullName evidence="5">AsKC10</fullName>
    </alternativeName>
</protein>
<accession>P0DN14</accession>
<name>VKTA_ANEVI</name>
<keyword id="KW-1015">Disulfide bond</keyword>
<keyword id="KW-0872">Ion channel impairing toxin</keyword>
<keyword id="KW-0166">Nematocyst</keyword>
<keyword id="KW-0632">Potassium channel impairing toxin</keyword>
<keyword id="KW-0646">Protease inhibitor</keyword>
<keyword id="KW-0964">Secreted</keyword>
<keyword id="KW-0722">Serine protease inhibitor</keyword>
<keyword id="KW-0732">Signal</keyword>
<keyword id="KW-0800">Toxin</keyword>
<keyword id="KW-1220">Voltage-gated potassium channel impairing toxin</keyword>
<proteinExistence type="inferred from homology"/>
<evidence type="ECO:0000250" key="1"/>
<evidence type="ECO:0000250" key="2">
    <source>
        <dbReference type="UniProtKB" id="P10280"/>
    </source>
</evidence>
<evidence type="ECO:0000250" key="3">
    <source>
        <dbReference type="UniProtKB" id="Q9TWF8"/>
    </source>
</evidence>
<evidence type="ECO:0000255" key="4">
    <source>
        <dbReference type="PROSITE-ProRule" id="PRU00031"/>
    </source>
</evidence>
<evidence type="ECO:0000303" key="5">
    <source>
    </source>
</evidence>
<evidence type="ECO:0000303" key="6">
    <source>
    </source>
</evidence>
<evidence type="ECO:0000305" key="7"/>
<dbReference type="EMBL" id="FK752628">
    <property type="status" value="NOT_ANNOTATED_CDS"/>
    <property type="molecule type" value="mRNA"/>
</dbReference>
<dbReference type="EMBL" id="FK752050">
    <property type="status" value="NOT_ANNOTATED_CDS"/>
    <property type="molecule type" value="mRNA"/>
</dbReference>
<dbReference type="SMR" id="P0DN14"/>
<dbReference type="GO" id="GO:0005576">
    <property type="term" value="C:extracellular region"/>
    <property type="evidence" value="ECO:0007669"/>
    <property type="project" value="UniProtKB-SubCell"/>
</dbReference>
<dbReference type="GO" id="GO:0042151">
    <property type="term" value="C:nematocyst"/>
    <property type="evidence" value="ECO:0007669"/>
    <property type="project" value="UniProtKB-SubCell"/>
</dbReference>
<dbReference type="GO" id="GO:0015459">
    <property type="term" value="F:potassium channel regulator activity"/>
    <property type="evidence" value="ECO:0007669"/>
    <property type="project" value="UniProtKB-KW"/>
</dbReference>
<dbReference type="GO" id="GO:0004867">
    <property type="term" value="F:serine-type endopeptidase inhibitor activity"/>
    <property type="evidence" value="ECO:0007669"/>
    <property type="project" value="UniProtKB-KW"/>
</dbReference>
<dbReference type="GO" id="GO:0090729">
    <property type="term" value="F:toxin activity"/>
    <property type="evidence" value="ECO:0007669"/>
    <property type="project" value="UniProtKB-KW"/>
</dbReference>
<dbReference type="CDD" id="cd22633">
    <property type="entry name" value="Kunitz_actitoxin-like"/>
    <property type="match status" value="1"/>
</dbReference>
<dbReference type="FunFam" id="4.10.410.10:FF:000021">
    <property type="entry name" value="Serine protease inhibitor, putative"/>
    <property type="match status" value="1"/>
</dbReference>
<dbReference type="Gene3D" id="4.10.410.10">
    <property type="entry name" value="Pancreatic trypsin inhibitor Kunitz domain"/>
    <property type="match status" value="1"/>
</dbReference>
<dbReference type="InterPro" id="IPR002223">
    <property type="entry name" value="Kunitz_BPTI"/>
</dbReference>
<dbReference type="InterPro" id="IPR036880">
    <property type="entry name" value="Kunitz_BPTI_sf"/>
</dbReference>
<dbReference type="InterPro" id="IPR020901">
    <property type="entry name" value="Prtase_inh_Kunz-CS"/>
</dbReference>
<dbReference type="InterPro" id="IPR050098">
    <property type="entry name" value="TFPI/VKTCI-like"/>
</dbReference>
<dbReference type="PANTHER" id="PTHR10083:SF374">
    <property type="entry name" value="BPTI_KUNITZ INHIBITOR DOMAIN-CONTAINING PROTEIN"/>
    <property type="match status" value="1"/>
</dbReference>
<dbReference type="PANTHER" id="PTHR10083">
    <property type="entry name" value="KUNITZ-TYPE PROTEASE INHIBITOR-RELATED"/>
    <property type="match status" value="1"/>
</dbReference>
<dbReference type="Pfam" id="PF00014">
    <property type="entry name" value="Kunitz_BPTI"/>
    <property type="match status" value="1"/>
</dbReference>
<dbReference type="PRINTS" id="PR00759">
    <property type="entry name" value="BASICPTASE"/>
</dbReference>
<dbReference type="SMART" id="SM00131">
    <property type="entry name" value="KU"/>
    <property type="match status" value="1"/>
</dbReference>
<dbReference type="SUPFAM" id="SSF57362">
    <property type="entry name" value="BPTI-like"/>
    <property type="match status" value="1"/>
</dbReference>
<dbReference type="PROSITE" id="PS00280">
    <property type="entry name" value="BPTI_KUNITZ_1"/>
    <property type="match status" value="1"/>
</dbReference>
<dbReference type="PROSITE" id="PS50279">
    <property type="entry name" value="BPTI_KUNITZ_2"/>
    <property type="match status" value="1"/>
</dbReference>
<reference key="1">
    <citation type="journal article" date="2009" name="BMC Genomics">
        <title>Comprehensive EST analysis of the symbiotic sea anemone, Anemonia viridis.</title>
        <authorList>
            <person name="Sabourault C."/>
            <person name="Ganot P."/>
            <person name="Deleury E."/>
            <person name="Allemand D."/>
            <person name="Furla P."/>
        </authorList>
    </citation>
    <scope>NUCLEOTIDE SEQUENCE [MRNA]</scope>
</reference>
<reference key="2">
    <citation type="journal article" date="2011" name="BMC Genomics">
        <title>The mining of toxin-like polypeptides from EST database by single residue distribution analysis.</title>
        <authorList>
            <person name="Kozlov S."/>
            <person name="Grishin E."/>
        </authorList>
    </citation>
    <scope>NOMENCLATURE</scope>
</reference>
<reference key="3">
    <citation type="journal article" date="2012" name="Toxicon">
        <title>Development of a rational nomenclature for naming peptide and protein toxins from sea anemones.</title>
        <authorList>
            <person name="Oliveira J.S."/>
            <person name="Fuentes-Silva D."/>
            <person name="King G.F."/>
        </authorList>
    </citation>
    <scope>NOMENCLATURE</scope>
</reference>